<sequence>MTIRNQRFSLLKQPIYSTLNQHLIDYPLPSILSYWWGFGSLAGICLVIQIVTGVFLAMNYTPHVDLAFNSVEHIMRDVEGGWLLRYMHANGASMFFIVVYLHIFRGLYYASYSSPREFVWCLGVVIFLLMIVTAFIGYVLPWGQMSFWGATVITSLASAIPVVGDTIVTWLWGGFSVDNATLNRFFSLHYLLPFILVGASLLHLAALHQYGSNNPLGVHSEMDKIAFYPYFYVKDLVGWVAFAIFFSIWIFFAPNVLGHPDNYIPANPMSTPPHIVPEWYFLPIYAILRSIPDKAGGVAAIALVFISLLALPFFKEMYVRSSSFRPIYQGIFWLLLADCLLLGWIGCQPVEAPFVTIGQISSFFFFLFFAITPILGRVGRGIPKYYTDETHRTGSFS</sequence>
<dbReference type="EMBL" id="X17064">
    <property type="protein sequence ID" value="CAA34910.1"/>
    <property type="status" value="ALT_SEQ"/>
    <property type="molecule type" value="Genomic_DNA"/>
</dbReference>
<dbReference type="SMR" id="P0C523"/>
<dbReference type="GO" id="GO:0005743">
    <property type="term" value="C:mitochondrial inner membrane"/>
    <property type="evidence" value="ECO:0007669"/>
    <property type="project" value="UniProtKB-SubCell"/>
</dbReference>
<dbReference type="GO" id="GO:0005739">
    <property type="term" value="C:mitochondrion"/>
    <property type="evidence" value="ECO:0000305"/>
    <property type="project" value="Gramene"/>
</dbReference>
<dbReference type="GO" id="GO:0045275">
    <property type="term" value="C:respiratory chain complex III"/>
    <property type="evidence" value="ECO:0007669"/>
    <property type="project" value="InterPro"/>
</dbReference>
<dbReference type="GO" id="GO:0046872">
    <property type="term" value="F:metal ion binding"/>
    <property type="evidence" value="ECO:0007669"/>
    <property type="project" value="UniProtKB-KW"/>
</dbReference>
<dbReference type="GO" id="GO:0008121">
    <property type="term" value="F:ubiquinol-cytochrome-c reductase activity"/>
    <property type="evidence" value="ECO:0007669"/>
    <property type="project" value="InterPro"/>
</dbReference>
<dbReference type="GO" id="GO:0006122">
    <property type="term" value="P:mitochondrial electron transport, ubiquinol to cytochrome c"/>
    <property type="evidence" value="ECO:0007669"/>
    <property type="project" value="TreeGrafter"/>
</dbReference>
<dbReference type="CDD" id="cd00290">
    <property type="entry name" value="cytochrome_b_C"/>
    <property type="match status" value="1"/>
</dbReference>
<dbReference type="CDD" id="cd00284">
    <property type="entry name" value="Cytochrome_b_N"/>
    <property type="match status" value="1"/>
</dbReference>
<dbReference type="FunFam" id="1.20.810.10:FF:000006">
    <property type="entry name" value="Cytochrome b"/>
    <property type="match status" value="1"/>
</dbReference>
<dbReference type="Gene3D" id="1.20.810.10">
    <property type="entry name" value="Cytochrome Bc1 Complex, Chain C"/>
    <property type="match status" value="1"/>
</dbReference>
<dbReference type="InterPro" id="IPR005798">
    <property type="entry name" value="Cyt_b/b6_C"/>
</dbReference>
<dbReference type="InterPro" id="IPR036150">
    <property type="entry name" value="Cyt_b/b6_C_sf"/>
</dbReference>
<dbReference type="InterPro" id="IPR005797">
    <property type="entry name" value="Cyt_b/b6_N"/>
</dbReference>
<dbReference type="InterPro" id="IPR027387">
    <property type="entry name" value="Cytb/b6-like_sf"/>
</dbReference>
<dbReference type="InterPro" id="IPR030689">
    <property type="entry name" value="Cytochrome_b"/>
</dbReference>
<dbReference type="InterPro" id="IPR048260">
    <property type="entry name" value="Cytochrome_b_C_euk/bac"/>
</dbReference>
<dbReference type="InterPro" id="IPR048259">
    <property type="entry name" value="Cytochrome_b_N_euk/bac"/>
</dbReference>
<dbReference type="InterPro" id="IPR016174">
    <property type="entry name" value="Di-haem_cyt_TM"/>
</dbReference>
<dbReference type="PANTHER" id="PTHR19271">
    <property type="entry name" value="CYTOCHROME B"/>
    <property type="match status" value="1"/>
</dbReference>
<dbReference type="PANTHER" id="PTHR19271:SF16">
    <property type="entry name" value="CYTOCHROME B"/>
    <property type="match status" value="1"/>
</dbReference>
<dbReference type="Pfam" id="PF00032">
    <property type="entry name" value="Cytochrom_B_C"/>
    <property type="match status" value="1"/>
</dbReference>
<dbReference type="Pfam" id="PF00033">
    <property type="entry name" value="Cytochrome_B"/>
    <property type="match status" value="1"/>
</dbReference>
<dbReference type="PIRSF" id="PIRSF038885">
    <property type="entry name" value="COB"/>
    <property type="match status" value="1"/>
</dbReference>
<dbReference type="SUPFAM" id="SSF81648">
    <property type="entry name" value="a domain/subunit of cytochrome bc1 complex (Ubiquinol-cytochrome c reductase)"/>
    <property type="match status" value="1"/>
</dbReference>
<dbReference type="SUPFAM" id="SSF81342">
    <property type="entry name" value="Transmembrane di-heme cytochromes"/>
    <property type="match status" value="1"/>
</dbReference>
<dbReference type="PROSITE" id="PS51003">
    <property type="entry name" value="CYTB_CTER"/>
    <property type="match status" value="1"/>
</dbReference>
<dbReference type="PROSITE" id="PS51002">
    <property type="entry name" value="CYTB_NTER"/>
    <property type="match status" value="1"/>
</dbReference>
<accession>P0C523</accession>
<accession>P14833</accession>
<accession>P92682</accession>
<accession>Q35293</accession>
<keyword id="KW-0249">Electron transport</keyword>
<keyword id="KW-0349">Heme</keyword>
<keyword id="KW-0408">Iron</keyword>
<keyword id="KW-0472">Membrane</keyword>
<keyword id="KW-0479">Metal-binding</keyword>
<keyword id="KW-0496">Mitochondrion</keyword>
<keyword id="KW-0999">Mitochondrion inner membrane</keyword>
<keyword id="KW-0679">Respiratory chain</keyword>
<keyword id="KW-0691">RNA editing</keyword>
<keyword id="KW-0812">Transmembrane</keyword>
<keyword id="KW-1133">Transmembrane helix</keyword>
<keyword id="KW-0813">Transport</keyword>
<keyword id="KW-0830">Ubiquinone</keyword>
<reference key="1">
    <citation type="journal article" date="1990" name="Nucleic Acids Res.">
        <title>Sequence of the rice mitochondrial gene for apocytochrome b.</title>
        <authorList>
            <person name="Kaleikau E.K."/>
            <person name="Andre C.P."/>
            <person name="Doshi B."/>
            <person name="Walbot V."/>
        </authorList>
    </citation>
    <scope>NUCLEOTIDE SEQUENCE [GENOMIC DNA]</scope>
    <source>
        <strain>cv. IR36</strain>
    </source>
</reference>
<feature type="chain" id="PRO_0000061328" description="Cytochrome b">
    <location>
        <begin position="1"/>
        <end position="397"/>
    </location>
</feature>
<feature type="transmembrane region" description="Helical" evidence="3">
    <location>
        <begin position="38"/>
        <end position="58"/>
    </location>
</feature>
<feature type="transmembrane region" description="Helical" evidence="3">
    <location>
        <begin position="82"/>
        <end position="104"/>
    </location>
</feature>
<feature type="transmembrane region" description="Helical" evidence="3">
    <location>
        <begin position="119"/>
        <end position="139"/>
    </location>
</feature>
<feature type="transmembrane region" description="Helical" evidence="3">
    <location>
        <begin position="185"/>
        <end position="205"/>
    </location>
</feature>
<feature type="transmembrane region" description="Helical" evidence="3">
    <location>
        <begin position="231"/>
        <end position="251"/>
    </location>
</feature>
<feature type="transmembrane region" description="Helical" evidence="3">
    <location>
        <begin position="295"/>
        <end position="315"/>
    </location>
</feature>
<feature type="transmembrane region" description="Helical" evidence="3">
    <location>
        <begin position="327"/>
        <end position="347"/>
    </location>
</feature>
<feature type="transmembrane region" description="Helical" evidence="3">
    <location>
        <begin position="354"/>
        <end position="373"/>
    </location>
</feature>
<feature type="binding site" description="axial binding residue" evidence="3">
    <location>
        <position position="88"/>
    </location>
    <ligand>
        <name>heme b</name>
        <dbReference type="ChEBI" id="CHEBI:60344"/>
        <label>b562</label>
    </ligand>
    <ligandPart>
        <name>Fe</name>
        <dbReference type="ChEBI" id="CHEBI:18248"/>
    </ligandPart>
</feature>
<feature type="binding site" description="axial binding residue" evidence="3">
    <location>
        <position position="102"/>
    </location>
    <ligand>
        <name>heme b</name>
        <dbReference type="ChEBI" id="CHEBI:60344"/>
        <label>b566</label>
    </ligand>
    <ligandPart>
        <name>Fe</name>
        <dbReference type="ChEBI" id="CHEBI:18248"/>
    </ligandPart>
</feature>
<feature type="binding site" description="axial binding residue" evidence="3">
    <location>
        <position position="189"/>
    </location>
    <ligand>
        <name>heme b</name>
        <dbReference type="ChEBI" id="CHEBI:60344"/>
        <label>b562</label>
    </ligand>
    <ligandPart>
        <name>Fe</name>
        <dbReference type="ChEBI" id="CHEBI:18248"/>
    </ligandPart>
</feature>
<feature type="binding site" description="axial binding residue" evidence="3">
    <location>
        <position position="203"/>
    </location>
    <ligand>
        <name>heme b</name>
        <dbReference type="ChEBI" id="CHEBI:60344"/>
        <label>b566</label>
    </ligand>
    <ligandPart>
        <name>Fe</name>
        <dbReference type="ChEBI" id="CHEBI:18248"/>
    </ligandPart>
</feature>
<feature type="binding site" evidence="2">
    <location>
        <position position="208"/>
    </location>
    <ligand>
        <name>a ubiquinone</name>
        <dbReference type="ChEBI" id="CHEBI:16389"/>
    </ligand>
</feature>
<comment type="function">
    <text evidence="3">Component of the ubiquinol-cytochrome c reductase complex (complex III or cytochrome b-c1 complex) that is part of the mitochondrial respiratory chain. The b-c1 complex mediates electron transfer from ubiquinol to cytochrome c. Contributes to the generation of a proton gradient across the mitochondrial membrane that is then used for ATP synthesis.</text>
</comment>
<comment type="cofactor">
    <cofactor evidence="3">
        <name>heme b</name>
        <dbReference type="ChEBI" id="CHEBI:60344"/>
    </cofactor>
    <text evidence="3">Binds 2 heme b groups non-covalently.</text>
</comment>
<comment type="subunit">
    <text evidence="1">The main subunits of complex b-c1 are: cytochrome b, cytochrome c1 and the Rieske protein.</text>
</comment>
<comment type="subcellular location">
    <subcellularLocation>
        <location evidence="3">Mitochondrion inner membrane</location>
        <topology evidence="3">Multi-pass membrane protein</topology>
    </subcellularLocation>
</comment>
<comment type="RNA editing">
    <location>
        <position position="60" evidence="1"/>
    </location>
    <location>
        <position position="96" evidence="1"/>
    </location>
    <location>
        <position position="100" evidence="1"/>
    </location>
    <location>
        <position position="109" evidence="1"/>
    </location>
    <location>
        <position position="140" evidence="1"/>
    </location>
    <location>
        <position position="190" evidence="1"/>
    </location>
    <location>
        <position position="194" evidence="1"/>
    </location>
    <location>
        <position position="227" evidence="1"/>
    </location>
    <location>
        <position position="239" evidence="1"/>
    </location>
    <location>
        <position position="242" evidence="1"/>
    </location>
    <location>
        <position position="270" evidence="1"/>
    </location>
    <location>
        <position position="285" evidence="1"/>
    </location>
    <location>
        <position position="303" evidence="1"/>
    </location>
    <location>
        <position position="328" evidence="1"/>
    </location>
    <location>
        <position position="361" evidence="1"/>
    </location>
    <location>
        <position position="3751" evidence="1"/>
    </location>
</comment>
<comment type="miscellaneous">
    <text evidence="1">Heme 1 (or BL or b562) is low-potential and absorbs at about 562 nm, and heme 2 (or BH or b566) is high-potential and absorbs at about 566 nm.</text>
</comment>
<comment type="similarity">
    <text evidence="4 5">Belongs to the cytochrome b family.</text>
</comment>
<comment type="caution">
    <text evidence="3">The protein contains only eight transmembrane helices, not nine as predicted by bioinformatics tools.</text>
</comment>
<protein>
    <recommendedName>
        <fullName>Cytochrome b</fullName>
    </recommendedName>
    <alternativeName>
        <fullName>Complex III subunit 3</fullName>
    </alternativeName>
    <alternativeName>
        <fullName>Complex III subunit III</fullName>
    </alternativeName>
    <alternativeName>
        <fullName>Cytochrome b-c1 complex subunit 3</fullName>
    </alternativeName>
    <alternativeName>
        <fullName>Ubiquinol-cytochrome-c reductase complex cytochrome b subunit</fullName>
    </alternativeName>
</protein>
<evidence type="ECO:0000250" key="1"/>
<evidence type="ECO:0000250" key="2">
    <source>
        <dbReference type="UniProtKB" id="P00157"/>
    </source>
</evidence>
<evidence type="ECO:0000250" key="3">
    <source>
        <dbReference type="UniProtKB" id="P00163"/>
    </source>
</evidence>
<evidence type="ECO:0000255" key="4">
    <source>
        <dbReference type="PROSITE-ProRule" id="PRU00967"/>
    </source>
</evidence>
<evidence type="ECO:0000255" key="5">
    <source>
        <dbReference type="PROSITE-ProRule" id="PRU00968"/>
    </source>
</evidence>
<geneLocation type="mitochondrion"/>
<proteinExistence type="inferred from homology"/>
<organism>
    <name type="scientific">Oryza sativa subsp. indica</name>
    <name type="common">Rice</name>
    <dbReference type="NCBI Taxonomy" id="39946"/>
    <lineage>
        <taxon>Eukaryota</taxon>
        <taxon>Viridiplantae</taxon>
        <taxon>Streptophyta</taxon>
        <taxon>Embryophyta</taxon>
        <taxon>Tracheophyta</taxon>
        <taxon>Spermatophyta</taxon>
        <taxon>Magnoliopsida</taxon>
        <taxon>Liliopsida</taxon>
        <taxon>Poales</taxon>
        <taxon>Poaceae</taxon>
        <taxon>BOP clade</taxon>
        <taxon>Oryzoideae</taxon>
        <taxon>Oryzeae</taxon>
        <taxon>Oryzinae</taxon>
        <taxon>Oryza</taxon>
        <taxon>Oryza sativa</taxon>
    </lineage>
</organism>
<name>CYB_ORYSI</name>
<gene>
    <name type="primary">MT-CYB</name>
    <name type="synonym">COB</name>
    <name type="synonym">CYTB</name>
    <name type="synonym">MTCYB</name>
</gene>